<reference key="1">
    <citation type="journal article" date="1996" name="DNA Res.">
        <title>Sequence analysis of the genome of the unicellular cyanobacterium Synechocystis sp. strain PCC6803. II. Sequence determination of the entire genome and assignment of potential protein-coding regions.</title>
        <authorList>
            <person name="Kaneko T."/>
            <person name="Sato S."/>
            <person name="Kotani H."/>
            <person name="Tanaka A."/>
            <person name="Asamizu E."/>
            <person name="Nakamura Y."/>
            <person name="Miyajima N."/>
            <person name="Hirosawa M."/>
            <person name="Sugiura M."/>
            <person name="Sasamoto S."/>
            <person name="Kimura T."/>
            <person name="Hosouchi T."/>
            <person name="Matsuno A."/>
            <person name="Muraki A."/>
            <person name="Nakazaki N."/>
            <person name="Naruo K."/>
            <person name="Okumura S."/>
            <person name="Shimpo S."/>
            <person name="Takeuchi C."/>
            <person name="Wada T."/>
            <person name="Watanabe A."/>
            <person name="Yamada M."/>
            <person name="Yasuda M."/>
            <person name="Tabata S."/>
        </authorList>
    </citation>
    <scope>NUCLEOTIDE SEQUENCE [LARGE SCALE GENOMIC DNA]</scope>
    <source>
        <strain>ATCC 27184 / PCC 6803 / Kazusa</strain>
    </source>
</reference>
<sequence>MDSTLGLEIIEVVEQAAIASAKWMGKGEKNTADQVAVEAMRERMNKIHMRGRIVIGEGERDDAPMLYIGEEVGICTREDAKSFCNPDELVEIDIAVDPCEGTNLVAYGQNGSMAVLAISEKGGLFAAPDFYMKKLAAPPAAKGHVDIDKSATENLKILSDCLNRSIEELVVVVMDRPRHKELIQEIRNAGARVRLISDGDVSAAISCAFSGTNIHALMGIGAAPEGVISAAAMRCLGGHFQGQLIYDPEVVKTGLIGESREGNLERLASMGIKNPDQVYNCEELACGETVLFAACGITPGTLMEGVRFFHGGVRTQSLVISSQSSTARFVDTVHMKESPKVIQLH</sequence>
<dbReference type="EC" id="3.1.3.11"/>
<dbReference type="EC" id="3.1.3.37"/>
<dbReference type="EMBL" id="BA000022">
    <property type="protein sequence ID" value="BAA17988.1"/>
    <property type="molecule type" value="Genomic_DNA"/>
</dbReference>
<dbReference type="PIR" id="S75126">
    <property type="entry name" value="S75126"/>
</dbReference>
<dbReference type="PDB" id="3ROJ">
    <property type="method" value="X-ray"/>
    <property type="resolution" value="2.30 A"/>
    <property type="chains" value="A/B/C/D=2-345"/>
</dbReference>
<dbReference type="PDB" id="3RPL">
    <property type="method" value="X-ray"/>
    <property type="resolution" value="2.40 A"/>
    <property type="chains" value="A/B/C/D=2-345"/>
</dbReference>
<dbReference type="PDBsum" id="3ROJ"/>
<dbReference type="PDBsum" id="3RPL"/>
<dbReference type="SMR" id="P73922"/>
<dbReference type="FunCoup" id="P73922">
    <property type="interactions" value="70"/>
</dbReference>
<dbReference type="IntAct" id="P73922">
    <property type="interactions" value="1"/>
</dbReference>
<dbReference type="MINT" id="P73922"/>
<dbReference type="STRING" id="1148.gene:10498858"/>
<dbReference type="PaxDb" id="1148-1653071"/>
<dbReference type="EnsemblBacteria" id="BAA17988">
    <property type="protein sequence ID" value="BAA17988"/>
    <property type="gene ID" value="BAA17988"/>
</dbReference>
<dbReference type="KEGG" id="syn:slr2094"/>
<dbReference type="eggNOG" id="COG1494">
    <property type="taxonomic scope" value="Bacteria"/>
</dbReference>
<dbReference type="InParanoid" id="P73922"/>
<dbReference type="PhylomeDB" id="P73922"/>
<dbReference type="BioCyc" id="MetaCyc:FBPSBP-MONOMER"/>
<dbReference type="BRENDA" id="3.1.3.11">
    <property type="organism ID" value="382"/>
</dbReference>
<dbReference type="BRENDA" id="3.1.3.37">
    <property type="organism ID" value="382"/>
</dbReference>
<dbReference type="UniPathway" id="UPA00116"/>
<dbReference type="EvolutionaryTrace" id="P73922"/>
<dbReference type="Proteomes" id="UP000001425">
    <property type="component" value="Chromosome"/>
</dbReference>
<dbReference type="GO" id="GO:0042132">
    <property type="term" value="F:fructose 1,6-bisphosphate 1-phosphatase activity"/>
    <property type="evidence" value="ECO:0000318"/>
    <property type="project" value="GO_Central"/>
</dbReference>
<dbReference type="GO" id="GO:0046872">
    <property type="term" value="F:metal ion binding"/>
    <property type="evidence" value="ECO:0007669"/>
    <property type="project" value="UniProtKB-KW"/>
</dbReference>
<dbReference type="GO" id="GO:0050278">
    <property type="term" value="F:sedoheptulose-bisphosphatase activity"/>
    <property type="evidence" value="ECO:0007669"/>
    <property type="project" value="UniProtKB-EC"/>
</dbReference>
<dbReference type="GO" id="GO:0030388">
    <property type="term" value="P:fructose 1,6-bisphosphate metabolic process"/>
    <property type="evidence" value="ECO:0000318"/>
    <property type="project" value="GO_Central"/>
</dbReference>
<dbReference type="GO" id="GO:0006094">
    <property type="term" value="P:gluconeogenesis"/>
    <property type="evidence" value="ECO:0000318"/>
    <property type="project" value="GO_Central"/>
</dbReference>
<dbReference type="GO" id="GO:0006071">
    <property type="term" value="P:glycerol metabolic process"/>
    <property type="evidence" value="ECO:0007669"/>
    <property type="project" value="InterPro"/>
</dbReference>
<dbReference type="GO" id="GO:0019253">
    <property type="term" value="P:reductive pentose-phosphate cycle"/>
    <property type="evidence" value="ECO:0007669"/>
    <property type="project" value="UniProtKB-UniPathway"/>
</dbReference>
<dbReference type="CDD" id="cd01516">
    <property type="entry name" value="FBPase_glpX"/>
    <property type="match status" value="1"/>
</dbReference>
<dbReference type="FunFam" id="3.40.190.90:FF:000001">
    <property type="entry name" value="Fructose-1,6-bisphosphatase"/>
    <property type="match status" value="1"/>
</dbReference>
<dbReference type="Gene3D" id="3.40.190.90">
    <property type="match status" value="1"/>
</dbReference>
<dbReference type="Gene3D" id="3.30.540.10">
    <property type="entry name" value="Fructose-1,6-Bisphosphatase, subunit A, domain 1"/>
    <property type="match status" value="1"/>
</dbReference>
<dbReference type="InterPro" id="IPR004464">
    <property type="entry name" value="FBPase_class-2/SBPase"/>
</dbReference>
<dbReference type="NCBIfam" id="TIGR00330">
    <property type="entry name" value="glpX"/>
    <property type="match status" value="1"/>
</dbReference>
<dbReference type="PANTHER" id="PTHR30447:SF0">
    <property type="entry name" value="FRUCTOSE-1,6-BISPHOSPHATASE 1 CLASS 2-RELATED"/>
    <property type="match status" value="1"/>
</dbReference>
<dbReference type="PANTHER" id="PTHR30447">
    <property type="entry name" value="FRUCTOSE-1,6-BISPHOSPHATASE CLASS 2"/>
    <property type="match status" value="1"/>
</dbReference>
<dbReference type="Pfam" id="PF03320">
    <property type="entry name" value="FBPase_glpX"/>
    <property type="match status" value="1"/>
</dbReference>
<dbReference type="PIRSF" id="PIRSF004532">
    <property type="entry name" value="GlpX"/>
    <property type="match status" value="1"/>
</dbReference>
<dbReference type="SUPFAM" id="SSF56655">
    <property type="entry name" value="Carbohydrate phosphatase"/>
    <property type="match status" value="1"/>
</dbReference>
<keyword id="KW-0002">3D-structure</keyword>
<keyword id="KW-0113">Calvin cycle</keyword>
<keyword id="KW-0119">Carbohydrate metabolism</keyword>
<keyword id="KW-0378">Hydrolase</keyword>
<keyword id="KW-0464">Manganese</keyword>
<keyword id="KW-0479">Metal-binding</keyword>
<keyword id="KW-1185">Reference proteome</keyword>
<comment type="function">
    <text evidence="1">Catalyzes the hydrolysis of fructose 1,6-bisphosphate (Fru 1,6-P2) and sedoheptulose 1,7-bisphosphate (Sed 1,7-P2) to fructose 6-phosphate and sedoheptulose 7-phosphate, respectively.</text>
</comment>
<comment type="catalytic activity">
    <reaction>
        <text>beta-D-fructose 1,6-bisphosphate + H2O = beta-D-fructose 6-phosphate + phosphate</text>
        <dbReference type="Rhea" id="RHEA:11064"/>
        <dbReference type="ChEBI" id="CHEBI:15377"/>
        <dbReference type="ChEBI" id="CHEBI:32966"/>
        <dbReference type="ChEBI" id="CHEBI:43474"/>
        <dbReference type="ChEBI" id="CHEBI:57634"/>
        <dbReference type="EC" id="3.1.3.11"/>
    </reaction>
</comment>
<comment type="catalytic activity">
    <reaction>
        <text>D-sedoheptulose 1,7-bisphosphate + H2O = D-sedoheptulose 7-phosphate + phosphate</text>
        <dbReference type="Rhea" id="RHEA:17461"/>
        <dbReference type="ChEBI" id="CHEBI:15377"/>
        <dbReference type="ChEBI" id="CHEBI:43474"/>
        <dbReference type="ChEBI" id="CHEBI:57483"/>
        <dbReference type="ChEBI" id="CHEBI:58335"/>
        <dbReference type="EC" id="3.1.3.37"/>
    </reaction>
</comment>
<comment type="cofactor">
    <cofactor evidence="1">
        <name>Mn(2+)</name>
        <dbReference type="ChEBI" id="CHEBI:29035"/>
    </cofactor>
</comment>
<comment type="pathway">
    <text>Carbohydrate biosynthesis; Calvin cycle.</text>
</comment>
<comment type="subunit">
    <text evidence="1">Homotetramer.</text>
</comment>
<comment type="similarity">
    <text evidence="2">Belongs to the FBPase class 2 family.</text>
</comment>
<organism>
    <name type="scientific">Synechocystis sp. (strain ATCC 27184 / PCC 6803 / Kazusa)</name>
    <dbReference type="NCBI Taxonomy" id="1111708"/>
    <lineage>
        <taxon>Bacteria</taxon>
        <taxon>Bacillati</taxon>
        <taxon>Cyanobacteriota</taxon>
        <taxon>Cyanophyceae</taxon>
        <taxon>Synechococcales</taxon>
        <taxon>Merismopediaceae</taxon>
        <taxon>Synechocystis</taxon>
    </lineage>
</organism>
<feature type="chain" id="PRO_0000342735" description="D-fructose 1,6-bisphosphatase class 2/sedoheptulose 1,7-bisphosphatase">
    <location>
        <begin position="1"/>
        <end position="345"/>
    </location>
</feature>
<feature type="binding site" evidence="1">
    <location>
        <position position="33"/>
    </location>
    <ligand>
        <name>Mn(2+)</name>
        <dbReference type="ChEBI" id="CHEBI:29035"/>
        <label>1</label>
    </ligand>
</feature>
<feature type="binding site" evidence="1">
    <location>
        <position position="57"/>
    </location>
    <ligand>
        <name>Mn(2+)</name>
        <dbReference type="ChEBI" id="CHEBI:29035"/>
        <label>1</label>
    </ligand>
</feature>
<feature type="binding site" evidence="1">
    <location>
        <position position="97"/>
    </location>
    <ligand>
        <name>Mn(2+)</name>
        <dbReference type="ChEBI" id="CHEBI:29035"/>
        <label>2</label>
    </ligand>
</feature>
<feature type="binding site" evidence="1">
    <location>
        <begin position="100"/>
        <end position="102"/>
    </location>
    <ligand>
        <name>substrate</name>
    </ligand>
</feature>
<feature type="binding site" evidence="1">
    <location>
        <position position="100"/>
    </location>
    <ligand>
        <name>Mn(2+)</name>
        <dbReference type="ChEBI" id="CHEBI:29035"/>
        <label>2</label>
    </ligand>
</feature>
<feature type="binding site" evidence="1">
    <location>
        <position position="131"/>
    </location>
    <ligand>
        <name>substrate</name>
    </ligand>
</feature>
<feature type="binding site" evidence="1">
    <location>
        <begin position="176"/>
        <end position="178"/>
    </location>
    <ligand>
        <name>substrate</name>
    </ligand>
</feature>
<feature type="binding site" evidence="1">
    <location>
        <begin position="198"/>
        <end position="200"/>
    </location>
    <ligand>
        <name>substrate</name>
    </ligand>
</feature>
<feature type="binding site" evidence="1">
    <location>
        <position position="225"/>
    </location>
    <ligand>
        <name>Mn(2+)</name>
        <dbReference type="ChEBI" id="CHEBI:29035"/>
        <label>2</label>
    </ligand>
</feature>
<feature type="helix" evidence="3">
    <location>
        <begin position="5"/>
        <end position="21"/>
    </location>
</feature>
<feature type="turn" evidence="3">
    <location>
        <begin position="22"/>
        <end position="25"/>
    </location>
</feature>
<feature type="helix" evidence="3">
    <location>
        <begin position="29"/>
        <end position="44"/>
    </location>
</feature>
<feature type="strand" evidence="3">
    <location>
        <begin position="50"/>
        <end position="57"/>
    </location>
</feature>
<feature type="turn" evidence="3">
    <location>
        <begin position="60"/>
        <end position="62"/>
    </location>
</feature>
<feature type="strand" evidence="3">
    <location>
        <begin position="64"/>
        <end position="66"/>
    </location>
</feature>
<feature type="strand" evidence="3">
    <location>
        <begin position="71"/>
        <end position="73"/>
    </location>
</feature>
<feature type="helix" evidence="3">
    <location>
        <begin position="74"/>
        <end position="76"/>
    </location>
</feature>
<feature type="helix" evidence="3">
    <location>
        <begin position="80"/>
        <end position="83"/>
    </location>
</feature>
<feature type="helix" evidence="3">
    <location>
        <begin position="87"/>
        <end position="89"/>
    </location>
</feature>
<feature type="strand" evidence="3">
    <location>
        <begin position="90"/>
        <end position="100"/>
    </location>
</feature>
<feature type="helix" evidence="3">
    <location>
        <begin position="102"/>
        <end position="107"/>
    </location>
</feature>
<feature type="strand" evidence="3">
    <location>
        <begin position="113"/>
        <end position="120"/>
    </location>
</feature>
<feature type="strand" evidence="3">
    <location>
        <begin position="131"/>
        <end position="137"/>
    </location>
</feature>
<feature type="helix" evidence="3">
    <location>
        <begin position="139"/>
        <end position="141"/>
    </location>
</feature>
<feature type="turn" evidence="3">
    <location>
        <begin position="142"/>
        <end position="144"/>
    </location>
</feature>
<feature type="helix" evidence="3">
    <location>
        <begin position="151"/>
        <end position="161"/>
    </location>
</feature>
<feature type="helix" evidence="3">
    <location>
        <begin position="166"/>
        <end position="168"/>
    </location>
</feature>
<feature type="strand" evidence="3">
    <location>
        <begin position="170"/>
        <end position="174"/>
    </location>
</feature>
<feature type="helix" evidence="3">
    <location>
        <begin position="177"/>
        <end position="179"/>
    </location>
</feature>
<feature type="helix" evidence="3">
    <location>
        <begin position="180"/>
        <end position="189"/>
    </location>
</feature>
<feature type="strand" evidence="3">
    <location>
        <begin position="192"/>
        <end position="198"/>
    </location>
</feature>
<feature type="helix" evidence="3">
    <location>
        <begin position="200"/>
        <end position="206"/>
    </location>
</feature>
<feature type="strand" evidence="3">
    <location>
        <begin position="216"/>
        <end position="222"/>
    </location>
</feature>
<feature type="helix" evidence="3">
    <location>
        <begin position="223"/>
        <end position="236"/>
    </location>
</feature>
<feature type="strand" evidence="3">
    <location>
        <begin position="239"/>
        <end position="245"/>
    </location>
</feature>
<feature type="turn" evidence="3">
    <location>
        <begin position="248"/>
        <end position="250"/>
    </location>
</feature>
<feature type="helix" evidence="3">
    <location>
        <begin position="260"/>
        <end position="269"/>
    </location>
</feature>
<feature type="strand" evidence="3">
    <location>
        <begin position="278"/>
        <end position="280"/>
    </location>
</feature>
<feature type="helix" evidence="3">
    <location>
        <begin position="281"/>
        <end position="284"/>
    </location>
</feature>
<feature type="strand" evidence="3">
    <location>
        <begin position="287"/>
        <end position="298"/>
    </location>
</feature>
<feature type="strand" evidence="3">
    <location>
        <begin position="301"/>
        <end position="303"/>
    </location>
</feature>
<feature type="strand" evidence="3">
    <location>
        <begin position="307"/>
        <end position="309"/>
    </location>
</feature>
<feature type="strand" evidence="3">
    <location>
        <begin position="312"/>
        <end position="321"/>
    </location>
</feature>
<feature type="turn" evidence="3">
    <location>
        <begin position="322"/>
        <end position="325"/>
    </location>
</feature>
<feature type="strand" evidence="3">
    <location>
        <begin position="326"/>
        <end position="335"/>
    </location>
</feature>
<name>FBSB_SYNY3</name>
<evidence type="ECO:0000250" key="1"/>
<evidence type="ECO:0000305" key="2"/>
<evidence type="ECO:0007829" key="3">
    <source>
        <dbReference type="PDB" id="3ROJ"/>
    </source>
</evidence>
<protein>
    <recommendedName>
        <fullName>D-fructose 1,6-bisphosphatase class 2/sedoheptulose 1,7-bisphosphatase</fullName>
        <shortName>FBPase class 2/SBPase</shortName>
        <ecNumber>3.1.3.11</ecNumber>
        <ecNumber>3.1.3.37</ecNumber>
    </recommendedName>
</protein>
<proteinExistence type="evidence at protein level"/>
<gene>
    <name type="ordered locus">slr2094</name>
</gene>
<accession>P73922</accession>